<accession>P55398</accession>
<proteinExistence type="inferred from homology"/>
<organism>
    <name type="scientific">Sinorhizobium fredii (strain NBRC 101917 / NGR234)</name>
    <dbReference type="NCBI Taxonomy" id="394"/>
    <lineage>
        <taxon>Bacteria</taxon>
        <taxon>Pseudomonadati</taxon>
        <taxon>Pseudomonadota</taxon>
        <taxon>Alphaproteobacteria</taxon>
        <taxon>Hyphomicrobiales</taxon>
        <taxon>Rhizobiaceae</taxon>
        <taxon>Sinorhizobium/Ensifer group</taxon>
        <taxon>Sinorhizobium</taxon>
    </lineage>
</organism>
<sequence>MVALKRFRATGPSFADLVPYAGLVDNGVLLLKDGSLMAGWYFAGPDSDSATDFERNELSRQINAILSRLGTGWMIQVEAARIPTYDYPSEDRCHFPDAVTRAIDAERRAHFARERGHFESKHALILTYRPSEAKKTAAQQIHLLGRGEP</sequence>
<feature type="chain" id="PRO_0000065613" description="Probable conjugal transfer protein TrbE part 1">
    <location>
        <begin position="1"/>
        <end position="149"/>
    </location>
</feature>
<comment type="similarity">
    <text evidence="1">Belongs to the TrbE/VirB4 family.</text>
</comment>
<comment type="caution">
    <text evidence="1">It is possible that trbEA and trbEB form a single orf.</text>
</comment>
<name>TRBE1_SINFN</name>
<reference key="1">
    <citation type="journal article" date="1997" name="Nature">
        <title>Molecular basis of symbiosis between Rhizobium and legumes.</title>
        <authorList>
            <person name="Freiberg C.A."/>
            <person name="Fellay R."/>
            <person name="Bairoch A."/>
            <person name="Broughton W.J."/>
            <person name="Rosenthal A."/>
            <person name="Perret X."/>
        </authorList>
    </citation>
    <scope>NUCLEOTIDE SEQUENCE [LARGE SCALE GENOMIC DNA]</scope>
    <source>
        <strain>NBRC 101917 / NGR234</strain>
    </source>
</reference>
<reference key="2">
    <citation type="journal article" date="2009" name="Appl. Environ. Microbiol.">
        <title>Rhizobium sp. strain NGR234 possesses a remarkable number of secretion systems.</title>
        <authorList>
            <person name="Schmeisser C."/>
            <person name="Liesegang H."/>
            <person name="Krysciak D."/>
            <person name="Bakkou N."/>
            <person name="Le Quere A."/>
            <person name="Wollherr A."/>
            <person name="Heinemeyer I."/>
            <person name="Morgenstern B."/>
            <person name="Pommerening-Roeser A."/>
            <person name="Flores M."/>
            <person name="Palacios R."/>
            <person name="Brenner S."/>
            <person name="Gottschalk G."/>
            <person name="Schmitz R.A."/>
            <person name="Broughton W.J."/>
            <person name="Perret X."/>
            <person name="Strittmatter A.W."/>
            <person name="Streit W.R."/>
        </authorList>
    </citation>
    <scope>NUCLEOTIDE SEQUENCE [LARGE SCALE GENOMIC DNA]</scope>
    <source>
        <strain>NBRC 101917 / NGR234</strain>
    </source>
</reference>
<gene>
    <name type="primary">trbEA</name>
    <name type="ordered locus">NGR_a04180</name>
    <name type="ORF">y4cP</name>
</gene>
<dbReference type="EMBL" id="U00090">
    <property type="protein sequence ID" value="AAB92431.1"/>
    <property type="molecule type" value="Genomic_DNA"/>
</dbReference>
<dbReference type="RefSeq" id="NP_443808.1">
    <property type="nucleotide sequence ID" value="NC_000914.2"/>
</dbReference>
<dbReference type="SMR" id="P55398"/>
<dbReference type="KEGG" id="rhi:NGR_a04180"/>
<dbReference type="PATRIC" id="fig|394.7.peg.439"/>
<dbReference type="eggNOG" id="COG3451">
    <property type="taxonomic scope" value="Bacteria"/>
</dbReference>
<dbReference type="HOGENOM" id="CLU_1748199_0_0_5"/>
<dbReference type="OrthoDB" id="9816422at2"/>
<dbReference type="Proteomes" id="UP000001054">
    <property type="component" value="Plasmid pNGR234a"/>
</dbReference>
<evidence type="ECO:0000305" key="1"/>
<geneLocation type="plasmid">
    <name>sym pNGR234a</name>
</geneLocation>
<keyword id="KW-0184">Conjugation</keyword>
<keyword id="KW-0614">Plasmid</keyword>
<keyword id="KW-1185">Reference proteome</keyword>
<protein>
    <recommendedName>
        <fullName>Probable conjugal transfer protein TrbE part 1</fullName>
    </recommendedName>
</protein>